<sequence length="379" mass="42558">MKILRKNHPLLKIVNHSFIDLPTPSSISSWWNFGSLLGVCLMIQILTGLFLAMHYTSDTTTAFSSVAHICRDVNYGWLIRYLHANGASMFFICLFIHVGRGIYYGSYVLSETWNIGIILFLTTMATAFVGYVLPWGQMSFWGATVITNLLSAIPYIGSTLVEWIWGGFSVDKATLTRFFAFHFILPFIITALVLVHLLFLHETGSNNPSGLNSDSDKIPFHPYYTIKDLLGILLLLLALMILALFFPDILGDPDNFTPANPLNTPAHIKPEWYFLFAYAILRSIPNKLGGVLALILSILILATFPLLNTSKQHGLIFRPITQTIYWTFIANLLVLTWIGGQPVEYPFTTIGQIASITYFTIIIILMPVSNTIENNIIKL</sequence>
<reference key="1">
    <citation type="journal article" date="1999" name="J. Mammal. Evol.">
        <title>Phylogenetic relationships and the radiation of Sigmodontine rodents in South America: evidence from cytochrome b.</title>
        <authorList>
            <person name="Smith M.F."/>
            <person name="Patton J.L."/>
        </authorList>
    </citation>
    <scope>NUCLEOTIDE SEQUENCE [GENOMIC DNA]</scope>
</reference>
<geneLocation type="mitochondrion"/>
<evidence type="ECO:0000250" key="1"/>
<evidence type="ECO:0000250" key="2">
    <source>
        <dbReference type="UniProtKB" id="P00157"/>
    </source>
</evidence>
<evidence type="ECO:0000255" key="3">
    <source>
        <dbReference type="PROSITE-ProRule" id="PRU00967"/>
    </source>
</evidence>
<evidence type="ECO:0000255" key="4">
    <source>
        <dbReference type="PROSITE-ProRule" id="PRU00968"/>
    </source>
</evidence>
<gene>
    <name type="primary">MT-CYB</name>
    <name type="synonym">COB</name>
    <name type="synonym">CYTB</name>
    <name type="synonym">MTCYB</name>
</gene>
<dbReference type="EMBL" id="AY494838">
    <property type="protein sequence ID" value="AAR88239.1"/>
    <property type="molecule type" value="Genomic_DNA"/>
</dbReference>
<dbReference type="SMR" id="Q6RSH6"/>
<dbReference type="GO" id="GO:0005743">
    <property type="term" value="C:mitochondrial inner membrane"/>
    <property type="evidence" value="ECO:0007669"/>
    <property type="project" value="UniProtKB-SubCell"/>
</dbReference>
<dbReference type="GO" id="GO:0045275">
    <property type="term" value="C:respiratory chain complex III"/>
    <property type="evidence" value="ECO:0007669"/>
    <property type="project" value="InterPro"/>
</dbReference>
<dbReference type="GO" id="GO:0046872">
    <property type="term" value="F:metal ion binding"/>
    <property type="evidence" value="ECO:0007669"/>
    <property type="project" value="UniProtKB-KW"/>
</dbReference>
<dbReference type="GO" id="GO:0008121">
    <property type="term" value="F:ubiquinol-cytochrome-c reductase activity"/>
    <property type="evidence" value="ECO:0007669"/>
    <property type="project" value="InterPro"/>
</dbReference>
<dbReference type="GO" id="GO:0006122">
    <property type="term" value="P:mitochondrial electron transport, ubiquinol to cytochrome c"/>
    <property type="evidence" value="ECO:0007669"/>
    <property type="project" value="TreeGrafter"/>
</dbReference>
<dbReference type="CDD" id="cd00290">
    <property type="entry name" value="cytochrome_b_C"/>
    <property type="match status" value="1"/>
</dbReference>
<dbReference type="CDD" id="cd00284">
    <property type="entry name" value="Cytochrome_b_N"/>
    <property type="match status" value="1"/>
</dbReference>
<dbReference type="FunFam" id="1.20.810.10:FF:000002">
    <property type="entry name" value="Cytochrome b"/>
    <property type="match status" value="1"/>
</dbReference>
<dbReference type="Gene3D" id="1.20.810.10">
    <property type="entry name" value="Cytochrome Bc1 Complex, Chain C"/>
    <property type="match status" value="1"/>
</dbReference>
<dbReference type="InterPro" id="IPR005798">
    <property type="entry name" value="Cyt_b/b6_C"/>
</dbReference>
<dbReference type="InterPro" id="IPR036150">
    <property type="entry name" value="Cyt_b/b6_C_sf"/>
</dbReference>
<dbReference type="InterPro" id="IPR005797">
    <property type="entry name" value="Cyt_b/b6_N"/>
</dbReference>
<dbReference type="InterPro" id="IPR027387">
    <property type="entry name" value="Cytb/b6-like_sf"/>
</dbReference>
<dbReference type="InterPro" id="IPR030689">
    <property type="entry name" value="Cytochrome_b"/>
</dbReference>
<dbReference type="InterPro" id="IPR048260">
    <property type="entry name" value="Cytochrome_b_C_euk/bac"/>
</dbReference>
<dbReference type="InterPro" id="IPR048259">
    <property type="entry name" value="Cytochrome_b_N_euk/bac"/>
</dbReference>
<dbReference type="InterPro" id="IPR016174">
    <property type="entry name" value="Di-haem_cyt_TM"/>
</dbReference>
<dbReference type="PANTHER" id="PTHR19271">
    <property type="entry name" value="CYTOCHROME B"/>
    <property type="match status" value="1"/>
</dbReference>
<dbReference type="PANTHER" id="PTHR19271:SF16">
    <property type="entry name" value="CYTOCHROME B"/>
    <property type="match status" value="1"/>
</dbReference>
<dbReference type="Pfam" id="PF00032">
    <property type="entry name" value="Cytochrom_B_C"/>
    <property type="match status" value="1"/>
</dbReference>
<dbReference type="Pfam" id="PF00033">
    <property type="entry name" value="Cytochrome_B"/>
    <property type="match status" value="1"/>
</dbReference>
<dbReference type="PIRSF" id="PIRSF038885">
    <property type="entry name" value="COB"/>
    <property type="match status" value="1"/>
</dbReference>
<dbReference type="SUPFAM" id="SSF81648">
    <property type="entry name" value="a domain/subunit of cytochrome bc1 complex (Ubiquinol-cytochrome c reductase)"/>
    <property type="match status" value="1"/>
</dbReference>
<dbReference type="SUPFAM" id="SSF81342">
    <property type="entry name" value="Transmembrane di-heme cytochromes"/>
    <property type="match status" value="1"/>
</dbReference>
<dbReference type="PROSITE" id="PS51003">
    <property type="entry name" value="CYTB_CTER"/>
    <property type="match status" value="1"/>
</dbReference>
<dbReference type="PROSITE" id="PS51002">
    <property type="entry name" value="CYTB_NTER"/>
    <property type="match status" value="1"/>
</dbReference>
<organism>
    <name type="scientific">Akodon albiventer</name>
    <name type="common">White-bellied grass mouse</name>
    <dbReference type="NCBI Taxonomy" id="251311"/>
    <lineage>
        <taxon>Eukaryota</taxon>
        <taxon>Metazoa</taxon>
        <taxon>Chordata</taxon>
        <taxon>Craniata</taxon>
        <taxon>Vertebrata</taxon>
        <taxon>Euteleostomi</taxon>
        <taxon>Mammalia</taxon>
        <taxon>Eutheria</taxon>
        <taxon>Euarchontoglires</taxon>
        <taxon>Glires</taxon>
        <taxon>Rodentia</taxon>
        <taxon>Myomorpha</taxon>
        <taxon>Muroidea</taxon>
        <taxon>Cricetidae</taxon>
        <taxon>Sigmodontinae</taxon>
        <taxon>Akodon</taxon>
    </lineage>
</organism>
<protein>
    <recommendedName>
        <fullName>Cytochrome b</fullName>
    </recommendedName>
    <alternativeName>
        <fullName>Complex III subunit 3</fullName>
    </alternativeName>
    <alternativeName>
        <fullName>Complex III subunit III</fullName>
    </alternativeName>
    <alternativeName>
        <fullName>Cytochrome b-c1 complex subunit 3</fullName>
    </alternativeName>
    <alternativeName>
        <fullName>Ubiquinol-cytochrome-c reductase complex cytochrome b subunit</fullName>
    </alternativeName>
</protein>
<feature type="chain" id="PRO_0000254971" description="Cytochrome b">
    <location>
        <begin position="1"/>
        <end position="379"/>
    </location>
</feature>
<feature type="transmembrane region" description="Helical" evidence="2">
    <location>
        <begin position="33"/>
        <end position="53"/>
    </location>
</feature>
<feature type="transmembrane region" description="Helical" evidence="2">
    <location>
        <begin position="77"/>
        <end position="98"/>
    </location>
</feature>
<feature type="transmembrane region" description="Helical" evidence="2">
    <location>
        <begin position="113"/>
        <end position="133"/>
    </location>
</feature>
<feature type="transmembrane region" description="Helical" evidence="2">
    <location>
        <begin position="178"/>
        <end position="198"/>
    </location>
</feature>
<feature type="transmembrane region" description="Helical" evidence="2">
    <location>
        <begin position="226"/>
        <end position="246"/>
    </location>
</feature>
<feature type="transmembrane region" description="Helical" evidence="2">
    <location>
        <begin position="288"/>
        <end position="308"/>
    </location>
</feature>
<feature type="transmembrane region" description="Helical" evidence="2">
    <location>
        <begin position="320"/>
        <end position="340"/>
    </location>
</feature>
<feature type="transmembrane region" description="Helical" evidence="2">
    <location>
        <begin position="347"/>
        <end position="367"/>
    </location>
</feature>
<feature type="binding site" description="axial binding residue" evidence="2">
    <location>
        <position position="83"/>
    </location>
    <ligand>
        <name>heme b</name>
        <dbReference type="ChEBI" id="CHEBI:60344"/>
        <label>b562</label>
    </ligand>
    <ligandPart>
        <name>Fe</name>
        <dbReference type="ChEBI" id="CHEBI:18248"/>
    </ligandPart>
</feature>
<feature type="binding site" description="axial binding residue" evidence="2">
    <location>
        <position position="97"/>
    </location>
    <ligand>
        <name>heme b</name>
        <dbReference type="ChEBI" id="CHEBI:60344"/>
        <label>b566</label>
    </ligand>
    <ligandPart>
        <name>Fe</name>
        <dbReference type="ChEBI" id="CHEBI:18248"/>
    </ligandPart>
</feature>
<feature type="binding site" description="axial binding residue" evidence="2">
    <location>
        <position position="182"/>
    </location>
    <ligand>
        <name>heme b</name>
        <dbReference type="ChEBI" id="CHEBI:60344"/>
        <label>b562</label>
    </ligand>
    <ligandPart>
        <name>Fe</name>
        <dbReference type="ChEBI" id="CHEBI:18248"/>
    </ligandPart>
</feature>
<feature type="binding site" description="axial binding residue" evidence="2">
    <location>
        <position position="196"/>
    </location>
    <ligand>
        <name>heme b</name>
        <dbReference type="ChEBI" id="CHEBI:60344"/>
        <label>b566</label>
    </ligand>
    <ligandPart>
        <name>Fe</name>
        <dbReference type="ChEBI" id="CHEBI:18248"/>
    </ligandPart>
</feature>
<feature type="binding site" evidence="2">
    <location>
        <position position="201"/>
    </location>
    <ligand>
        <name>a ubiquinone</name>
        <dbReference type="ChEBI" id="CHEBI:16389"/>
    </ligand>
</feature>
<proteinExistence type="inferred from homology"/>
<keyword id="KW-0249">Electron transport</keyword>
<keyword id="KW-0349">Heme</keyword>
<keyword id="KW-0408">Iron</keyword>
<keyword id="KW-0472">Membrane</keyword>
<keyword id="KW-0479">Metal-binding</keyword>
<keyword id="KW-0496">Mitochondrion</keyword>
<keyword id="KW-0999">Mitochondrion inner membrane</keyword>
<keyword id="KW-0679">Respiratory chain</keyword>
<keyword id="KW-0812">Transmembrane</keyword>
<keyword id="KW-1133">Transmembrane helix</keyword>
<keyword id="KW-0813">Transport</keyword>
<keyword id="KW-0830">Ubiquinone</keyword>
<comment type="function">
    <text evidence="2">Component of the ubiquinol-cytochrome c reductase complex (complex III or cytochrome b-c1 complex) that is part of the mitochondrial respiratory chain. The b-c1 complex mediates electron transfer from ubiquinol to cytochrome c. Contributes to the generation of a proton gradient across the mitochondrial membrane that is then used for ATP synthesis.</text>
</comment>
<comment type="cofactor">
    <cofactor evidence="2">
        <name>heme b</name>
        <dbReference type="ChEBI" id="CHEBI:60344"/>
    </cofactor>
    <text evidence="2">Binds 2 heme b groups non-covalently.</text>
</comment>
<comment type="subunit">
    <text evidence="2">The cytochrome bc1 complex contains 11 subunits: 3 respiratory subunits (MT-CYB, CYC1 and UQCRFS1), 2 core proteins (UQCRC1 and UQCRC2) and 6 low-molecular weight proteins (UQCRH/QCR6, UQCRB/QCR7, UQCRQ/QCR8, UQCR10/QCR9, UQCR11/QCR10 and a cleavage product of UQCRFS1). This cytochrome bc1 complex then forms a dimer.</text>
</comment>
<comment type="subcellular location">
    <subcellularLocation>
        <location evidence="2">Mitochondrion inner membrane</location>
        <topology evidence="2">Multi-pass membrane protein</topology>
    </subcellularLocation>
</comment>
<comment type="miscellaneous">
    <text evidence="1">Heme 1 (or BL or b562) is low-potential and absorbs at about 562 nm, and heme 2 (or BH or b566) is high-potential and absorbs at about 566 nm.</text>
</comment>
<comment type="similarity">
    <text evidence="3 4">Belongs to the cytochrome b family.</text>
</comment>
<comment type="caution">
    <text evidence="2">The full-length protein contains only eight transmembrane helices, not nine as predicted by bioinformatics tools.</text>
</comment>
<name>CYB_AKOAL</name>
<accession>Q6RSH6</accession>